<keyword id="KW-0963">Cytoplasm</keyword>
<keyword id="KW-0489">Methyltransferase</keyword>
<keyword id="KW-0698">rRNA processing</keyword>
<keyword id="KW-0949">S-adenosyl-L-methionine</keyword>
<keyword id="KW-0808">Transferase</keyword>
<sequence>MGNEFQHRTVLLDEAVDALVTRPDGVYVDGTFGRGGHSRAVLARLGDAGRLIAFDKDPRAIETAESIEDARFEIVHDSFAAMKGALDARGVGRVSGVLLDLGVSSPQVDDPARGFSFRANGPLDMRMDPTRGESAAEWLARASVQELTEVIRDYGEERFAFQIAKAIVARRAESDRLGPLDSTGELAQIVGHVVKTREKGKDPATRTFQAIRIHVNQELADLQVVLEAALSLLEQGGRLVVISFHSLEDRIVKRFLQAHASAPAVDRRLPIRAADLPRPPLKLLGRMFPNDAEVAANPRARSAVMRIAERVAP</sequence>
<name>RSMH_BURP6</name>
<gene>
    <name evidence="1" type="primary">rsmH</name>
    <name type="synonym">mraW</name>
    <name type="ordered locus">BURPS668_3533</name>
</gene>
<accession>A3NDX2</accession>
<reference key="1">
    <citation type="journal article" date="2010" name="Genome Biol. Evol.">
        <title>Continuing evolution of Burkholderia mallei through genome reduction and large-scale rearrangements.</title>
        <authorList>
            <person name="Losada L."/>
            <person name="Ronning C.M."/>
            <person name="DeShazer D."/>
            <person name="Woods D."/>
            <person name="Fedorova N."/>
            <person name="Kim H.S."/>
            <person name="Shabalina S.A."/>
            <person name="Pearson T.R."/>
            <person name="Brinkac L."/>
            <person name="Tan P."/>
            <person name="Nandi T."/>
            <person name="Crabtree J."/>
            <person name="Badger J."/>
            <person name="Beckstrom-Sternberg S."/>
            <person name="Saqib M."/>
            <person name="Schutzer S.E."/>
            <person name="Keim P."/>
            <person name="Nierman W.C."/>
        </authorList>
    </citation>
    <scope>NUCLEOTIDE SEQUENCE [LARGE SCALE GENOMIC DNA]</scope>
    <source>
        <strain>668</strain>
    </source>
</reference>
<protein>
    <recommendedName>
        <fullName evidence="1">Ribosomal RNA small subunit methyltransferase H</fullName>
        <ecNumber evidence="1">2.1.1.199</ecNumber>
    </recommendedName>
    <alternativeName>
        <fullName evidence="1">16S rRNA m(4)C1402 methyltransferase</fullName>
    </alternativeName>
    <alternativeName>
        <fullName evidence="1">rRNA (cytosine-N(4)-)-methyltransferase RsmH</fullName>
    </alternativeName>
</protein>
<comment type="function">
    <text evidence="1">Specifically methylates the N4 position of cytidine in position 1402 (C1402) of 16S rRNA.</text>
</comment>
<comment type="catalytic activity">
    <reaction evidence="1">
        <text>cytidine(1402) in 16S rRNA + S-adenosyl-L-methionine = N(4)-methylcytidine(1402) in 16S rRNA + S-adenosyl-L-homocysteine + H(+)</text>
        <dbReference type="Rhea" id="RHEA:42928"/>
        <dbReference type="Rhea" id="RHEA-COMP:10286"/>
        <dbReference type="Rhea" id="RHEA-COMP:10287"/>
        <dbReference type="ChEBI" id="CHEBI:15378"/>
        <dbReference type="ChEBI" id="CHEBI:57856"/>
        <dbReference type="ChEBI" id="CHEBI:59789"/>
        <dbReference type="ChEBI" id="CHEBI:74506"/>
        <dbReference type="ChEBI" id="CHEBI:82748"/>
        <dbReference type="EC" id="2.1.1.199"/>
    </reaction>
</comment>
<comment type="subcellular location">
    <subcellularLocation>
        <location evidence="1">Cytoplasm</location>
    </subcellularLocation>
</comment>
<comment type="similarity">
    <text evidence="1">Belongs to the methyltransferase superfamily. RsmH family.</text>
</comment>
<evidence type="ECO:0000255" key="1">
    <source>
        <dbReference type="HAMAP-Rule" id="MF_01007"/>
    </source>
</evidence>
<organism>
    <name type="scientific">Burkholderia pseudomallei (strain 668)</name>
    <dbReference type="NCBI Taxonomy" id="320373"/>
    <lineage>
        <taxon>Bacteria</taxon>
        <taxon>Pseudomonadati</taxon>
        <taxon>Pseudomonadota</taxon>
        <taxon>Betaproteobacteria</taxon>
        <taxon>Burkholderiales</taxon>
        <taxon>Burkholderiaceae</taxon>
        <taxon>Burkholderia</taxon>
        <taxon>pseudomallei group</taxon>
    </lineage>
</organism>
<dbReference type="EC" id="2.1.1.199" evidence="1"/>
<dbReference type="EMBL" id="CP000570">
    <property type="protein sequence ID" value="ABN81414.1"/>
    <property type="molecule type" value="Genomic_DNA"/>
</dbReference>
<dbReference type="RefSeq" id="WP_004194427.1">
    <property type="nucleotide sequence ID" value="NC_009074.1"/>
</dbReference>
<dbReference type="SMR" id="A3NDX2"/>
<dbReference type="GeneID" id="93061635"/>
<dbReference type="KEGG" id="bpd:BURPS668_3533"/>
<dbReference type="HOGENOM" id="CLU_038422_2_0_4"/>
<dbReference type="GO" id="GO:0005737">
    <property type="term" value="C:cytoplasm"/>
    <property type="evidence" value="ECO:0007669"/>
    <property type="project" value="UniProtKB-SubCell"/>
</dbReference>
<dbReference type="GO" id="GO:0071424">
    <property type="term" value="F:rRNA (cytosine-N4-)-methyltransferase activity"/>
    <property type="evidence" value="ECO:0007669"/>
    <property type="project" value="UniProtKB-UniRule"/>
</dbReference>
<dbReference type="GO" id="GO:0070475">
    <property type="term" value="P:rRNA base methylation"/>
    <property type="evidence" value="ECO:0007669"/>
    <property type="project" value="UniProtKB-UniRule"/>
</dbReference>
<dbReference type="Gene3D" id="1.10.150.170">
    <property type="entry name" value="Putative methyltransferase TM0872, insert domain"/>
    <property type="match status" value="1"/>
</dbReference>
<dbReference type="Gene3D" id="3.40.50.150">
    <property type="entry name" value="Vaccinia Virus protein VP39"/>
    <property type="match status" value="1"/>
</dbReference>
<dbReference type="HAMAP" id="MF_01007">
    <property type="entry name" value="16SrRNA_methyltr_H"/>
    <property type="match status" value="1"/>
</dbReference>
<dbReference type="InterPro" id="IPR002903">
    <property type="entry name" value="RsmH"/>
</dbReference>
<dbReference type="InterPro" id="IPR023397">
    <property type="entry name" value="SAM-dep_MeTrfase_MraW_recog"/>
</dbReference>
<dbReference type="InterPro" id="IPR029063">
    <property type="entry name" value="SAM-dependent_MTases_sf"/>
</dbReference>
<dbReference type="NCBIfam" id="TIGR00006">
    <property type="entry name" value="16S rRNA (cytosine(1402)-N(4))-methyltransferase RsmH"/>
    <property type="match status" value="1"/>
</dbReference>
<dbReference type="PANTHER" id="PTHR11265:SF0">
    <property type="entry name" value="12S RRNA N4-METHYLCYTIDINE METHYLTRANSFERASE"/>
    <property type="match status" value="1"/>
</dbReference>
<dbReference type="PANTHER" id="PTHR11265">
    <property type="entry name" value="S-ADENOSYL-METHYLTRANSFERASE MRAW"/>
    <property type="match status" value="1"/>
</dbReference>
<dbReference type="Pfam" id="PF01795">
    <property type="entry name" value="Methyltransf_5"/>
    <property type="match status" value="1"/>
</dbReference>
<dbReference type="PIRSF" id="PIRSF004486">
    <property type="entry name" value="MraW"/>
    <property type="match status" value="1"/>
</dbReference>
<dbReference type="SUPFAM" id="SSF81799">
    <property type="entry name" value="Putative methyltransferase TM0872, insert domain"/>
    <property type="match status" value="1"/>
</dbReference>
<dbReference type="SUPFAM" id="SSF53335">
    <property type="entry name" value="S-adenosyl-L-methionine-dependent methyltransferases"/>
    <property type="match status" value="1"/>
</dbReference>
<feature type="chain" id="PRO_0000386779" description="Ribosomal RNA small subunit methyltransferase H">
    <location>
        <begin position="1"/>
        <end position="313"/>
    </location>
</feature>
<feature type="binding site" evidence="1">
    <location>
        <begin position="35"/>
        <end position="37"/>
    </location>
    <ligand>
        <name>S-adenosyl-L-methionine</name>
        <dbReference type="ChEBI" id="CHEBI:59789"/>
    </ligand>
</feature>
<feature type="binding site" evidence="1">
    <location>
        <position position="55"/>
    </location>
    <ligand>
        <name>S-adenosyl-L-methionine</name>
        <dbReference type="ChEBI" id="CHEBI:59789"/>
    </ligand>
</feature>
<feature type="binding site" evidence="1">
    <location>
        <position position="79"/>
    </location>
    <ligand>
        <name>S-adenosyl-L-methionine</name>
        <dbReference type="ChEBI" id="CHEBI:59789"/>
    </ligand>
</feature>
<feature type="binding site" evidence="1">
    <location>
        <position position="100"/>
    </location>
    <ligand>
        <name>S-adenosyl-L-methionine</name>
        <dbReference type="ChEBI" id="CHEBI:59789"/>
    </ligand>
</feature>
<feature type="binding site" evidence="1">
    <location>
        <position position="107"/>
    </location>
    <ligand>
        <name>S-adenosyl-L-methionine</name>
        <dbReference type="ChEBI" id="CHEBI:59789"/>
    </ligand>
</feature>
<proteinExistence type="inferred from homology"/>